<protein>
    <recommendedName>
        <fullName evidence="1">tRNA-specific 2-thiouridylase MnmA</fullName>
        <ecNumber evidence="1">2.8.1.13</ecNumber>
    </recommendedName>
</protein>
<proteinExistence type="inferred from homology"/>
<feature type="chain" id="PRO_0000349670" description="tRNA-specific 2-thiouridylase MnmA">
    <location>
        <begin position="1"/>
        <end position="377"/>
    </location>
</feature>
<feature type="region of interest" description="Interaction with target base in tRNA" evidence="1">
    <location>
        <begin position="102"/>
        <end position="104"/>
    </location>
</feature>
<feature type="region of interest" description="Interaction with tRNA" evidence="1">
    <location>
        <begin position="154"/>
        <end position="156"/>
    </location>
</feature>
<feature type="region of interest" description="Interaction with tRNA" evidence="1">
    <location>
        <begin position="315"/>
        <end position="316"/>
    </location>
</feature>
<feature type="active site" description="Nucleophile" evidence="1">
    <location>
        <position position="107"/>
    </location>
</feature>
<feature type="active site" description="Cysteine persulfide intermediate" evidence="1">
    <location>
        <position position="204"/>
    </location>
</feature>
<feature type="binding site" evidence="1">
    <location>
        <begin position="16"/>
        <end position="23"/>
    </location>
    <ligand>
        <name>ATP</name>
        <dbReference type="ChEBI" id="CHEBI:30616"/>
    </ligand>
</feature>
<feature type="binding site" evidence="1">
    <location>
        <position position="42"/>
    </location>
    <ligand>
        <name>ATP</name>
        <dbReference type="ChEBI" id="CHEBI:30616"/>
    </ligand>
</feature>
<feature type="binding site" evidence="1">
    <location>
        <position position="131"/>
    </location>
    <ligand>
        <name>ATP</name>
        <dbReference type="ChEBI" id="CHEBI:30616"/>
    </ligand>
</feature>
<feature type="site" description="Interaction with tRNA" evidence="1">
    <location>
        <position position="132"/>
    </location>
</feature>
<feature type="site" description="Interaction with tRNA" evidence="1">
    <location>
        <position position="348"/>
    </location>
</feature>
<feature type="disulfide bond" description="Alternate" evidence="1">
    <location>
        <begin position="107"/>
        <end position="204"/>
    </location>
</feature>
<evidence type="ECO:0000255" key="1">
    <source>
        <dbReference type="HAMAP-Rule" id="MF_00144"/>
    </source>
</evidence>
<reference key="1">
    <citation type="journal article" date="2006" name="Proc. Natl. Acad. Sci. U.S.A.">
        <title>Comparative genomics of the lactic acid bacteria.</title>
        <authorList>
            <person name="Makarova K.S."/>
            <person name="Slesarev A."/>
            <person name="Wolf Y.I."/>
            <person name="Sorokin A."/>
            <person name="Mirkin B."/>
            <person name="Koonin E.V."/>
            <person name="Pavlov A."/>
            <person name="Pavlova N."/>
            <person name="Karamychev V."/>
            <person name="Polouchine N."/>
            <person name="Shakhova V."/>
            <person name="Grigoriev I."/>
            <person name="Lou Y."/>
            <person name="Rohksar D."/>
            <person name="Lucas S."/>
            <person name="Huang K."/>
            <person name="Goodstein D.M."/>
            <person name="Hawkins T."/>
            <person name="Plengvidhya V."/>
            <person name="Welker D."/>
            <person name="Hughes J."/>
            <person name="Goh Y."/>
            <person name="Benson A."/>
            <person name="Baldwin K."/>
            <person name="Lee J.-H."/>
            <person name="Diaz-Muniz I."/>
            <person name="Dosti B."/>
            <person name="Smeianov V."/>
            <person name="Wechter W."/>
            <person name="Barabote R."/>
            <person name="Lorca G."/>
            <person name="Altermann E."/>
            <person name="Barrangou R."/>
            <person name="Ganesan B."/>
            <person name="Xie Y."/>
            <person name="Rawsthorne H."/>
            <person name="Tamir D."/>
            <person name="Parker C."/>
            <person name="Breidt F."/>
            <person name="Broadbent J.R."/>
            <person name="Hutkins R."/>
            <person name="O'Sullivan D."/>
            <person name="Steele J."/>
            <person name="Unlu G."/>
            <person name="Saier M.H. Jr."/>
            <person name="Klaenhammer T."/>
            <person name="Richardson P."/>
            <person name="Kozyavkin S."/>
            <person name="Weimer B.C."/>
            <person name="Mills D.A."/>
        </authorList>
    </citation>
    <scope>NUCLEOTIDE SEQUENCE [LARGE SCALE GENOMIC DNA]</scope>
    <source>
        <strain>ATCC 334 / BCRC 17002 / CCUG 31169 / CIP 107868 / KCTC 3260 / NRRL B-441</strain>
    </source>
</reference>
<sequence>MMVIVLDNSNIRVVVGMSGGVDSSVTALLLKQQGYDVVGVFMKNWDDTDENGVCTATTDYEDVAKVASEIGIPYYSINFEKEYWDRVFQYFLDEYKAGRTPNPDVMCNKEIKFKAFLDYADQLNADYIAMGHYAQVKTDENGIVHMLRGADGNKDQTYFLSQLSQDQLKKSLFPIGHLQKPEVRKIAEAAGLATAKKKDSTGICFIGERNFKQFLSTYLPAQPGKMMTVDGVEMGTHDGLMYYTIGQRQGLGIGGNSDNSEPWFVVGKDLDKNILYVGQGFDNPALMATSLSASNLNWTTGQAPAEGTHMTAKFRYRQRDTGVTLHYHDDGTATVDFDVPVRAITPGQAVVFYDGDECLGGGTIDAAYAHTNELQYV</sequence>
<gene>
    <name evidence="1" type="primary">mnmA</name>
    <name type="ordered locus">LSEI_1292</name>
</gene>
<dbReference type="EC" id="2.8.1.13" evidence="1"/>
<dbReference type="EMBL" id="CP000423">
    <property type="protein sequence ID" value="ABJ70075.1"/>
    <property type="molecule type" value="Genomic_DNA"/>
</dbReference>
<dbReference type="RefSeq" id="WP_003565200.1">
    <property type="nucleotide sequence ID" value="NC_008526.1"/>
</dbReference>
<dbReference type="RefSeq" id="YP_806517.1">
    <property type="nucleotide sequence ID" value="NC_008526.1"/>
</dbReference>
<dbReference type="SMR" id="Q039P7"/>
<dbReference type="STRING" id="321967.LSEI_1292"/>
<dbReference type="PaxDb" id="321967-LSEI_1292"/>
<dbReference type="GeneID" id="57089970"/>
<dbReference type="KEGG" id="lca:LSEI_1292"/>
<dbReference type="PATRIC" id="fig|321967.11.peg.1270"/>
<dbReference type="HOGENOM" id="CLU_035188_1_0_9"/>
<dbReference type="Proteomes" id="UP000001651">
    <property type="component" value="Chromosome"/>
</dbReference>
<dbReference type="GO" id="GO:0005737">
    <property type="term" value="C:cytoplasm"/>
    <property type="evidence" value="ECO:0007669"/>
    <property type="project" value="UniProtKB-SubCell"/>
</dbReference>
<dbReference type="GO" id="GO:0005524">
    <property type="term" value="F:ATP binding"/>
    <property type="evidence" value="ECO:0007669"/>
    <property type="project" value="UniProtKB-KW"/>
</dbReference>
<dbReference type="GO" id="GO:0000049">
    <property type="term" value="F:tRNA binding"/>
    <property type="evidence" value="ECO:0007669"/>
    <property type="project" value="UniProtKB-KW"/>
</dbReference>
<dbReference type="GO" id="GO:0103016">
    <property type="term" value="F:tRNA-uridine 2-sulfurtransferase activity"/>
    <property type="evidence" value="ECO:0007669"/>
    <property type="project" value="UniProtKB-EC"/>
</dbReference>
<dbReference type="GO" id="GO:0002143">
    <property type="term" value="P:tRNA wobble position uridine thiolation"/>
    <property type="evidence" value="ECO:0007669"/>
    <property type="project" value="TreeGrafter"/>
</dbReference>
<dbReference type="CDD" id="cd01998">
    <property type="entry name" value="MnmA_TRMU-like"/>
    <property type="match status" value="1"/>
</dbReference>
<dbReference type="FunFam" id="2.30.30.280:FF:000001">
    <property type="entry name" value="tRNA-specific 2-thiouridylase MnmA"/>
    <property type="match status" value="1"/>
</dbReference>
<dbReference type="FunFam" id="2.40.30.10:FF:000023">
    <property type="entry name" value="tRNA-specific 2-thiouridylase MnmA"/>
    <property type="match status" value="1"/>
</dbReference>
<dbReference type="FunFam" id="3.40.50.620:FF:000004">
    <property type="entry name" value="tRNA-specific 2-thiouridylase MnmA"/>
    <property type="match status" value="1"/>
</dbReference>
<dbReference type="Gene3D" id="2.30.30.280">
    <property type="entry name" value="Adenine nucleotide alpha hydrolases-like domains"/>
    <property type="match status" value="1"/>
</dbReference>
<dbReference type="Gene3D" id="3.40.50.620">
    <property type="entry name" value="HUPs"/>
    <property type="match status" value="1"/>
</dbReference>
<dbReference type="Gene3D" id="2.40.30.10">
    <property type="entry name" value="Translation factors"/>
    <property type="match status" value="1"/>
</dbReference>
<dbReference type="HAMAP" id="MF_00144">
    <property type="entry name" value="tRNA_thiouridyl_MnmA"/>
    <property type="match status" value="1"/>
</dbReference>
<dbReference type="InterPro" id="IPR004506">
    <property type="entry name" value="MnmA-like"/>
</dbReference>
<dbReference type="InterPro" id="IPR046885">
    <property type="entry name" value="MnmA-like_C"/>
</dbReference>
<dbReference type="InterPro" id="IPR046884">
    <property type="entry name" value="MnmA-like_central"/>
</dbReference>
<dbReference type="InterPro" id="IPR023382">
    <property type="entry name" value="MnmA-like_central_sf"/>
</dbReference>
<dbReference type="InterPro" id="IPR014729">
    <property type="entry name" value="Rossmann-like_a/b/a_fold"/>
</dbReference>
<dbReference type="NCBIfam" id="NF001138">
    <property type="entry name" value="PRK00143.1"/>
    <property type="match status" value="1"/>
</dbReference>
<dbReference type="NCBIfam" id="TIGR00420">
    <property type="entry name" value="trmU"/>
    <property type="match status" value="1"/>
</dbReference>
<dbReference type="PANTHER" id="PTHR11933:SF5">
    <property type="entry name" value="MITOCHONDRIAL TRNA-SPECIFIC 2-THIOURIDYLASE 1"/>
    <property type="match status" value="1"/>
</dbReference>
<dbReference type="PANTHER" id="PTHR11933">
    <property type="entry name" value="TRNA 5-METHYLAMINOMETHYL-2-THIOURIDYLATE -METHYLTRANSFERASE"/>
    <property type="match status" value="1"/>
</dbReference>
<dbReference type="Pfam" id="PF03054">
    <property type="entry name" value="tRNA_Me_trans"/>
    <property type="match status" value="1"/>
</dbReference>
<dbReference type="Pfam" id="PF20258">
    <property type="entry name" value="tRNA_Me_trans_C"/>
    <property type="match status" value="1"/>
</dbReference>
<dbReference type="Pfam" id="PF20259">
    <property type="entry name" value="tRNA_Me_trans_M"/>
    <property type="match status" value="1"/>
</dbReference>
<dbReference type="SUPFAM" id="SSF52402">
    <property type="entry name" value="Adenine nucleotide alpha hydrolases-like"/>
    <property type="match status" value="1"/>
</dbReference>
<comment type="function">
    <text evidence="1">Catalyzes the 2-thiolation of uridine at the wobble position (U34) of tRNA, leading to the formation of s(2)U34.</text>
</comment>
<comment type="catalytic activity">
    <reaction evidence="1">
        <text>S-sulfanyl-L-cysteinyl-[protein] + uridine(34) in tRNA + AH2 + ATP = 2-thiouridine(34) in tRNA + L-cysteinyl-[protein] + A + AMP + diphosphate + H(+)</text>
        <dbReference type="Rhea" id="RHEA:47032"/>
        <dbReference type="Rhea" id="RHEA-COMP:10131"/>
        <dbReference type="Rhea" id="RHEA-COMP:11726"/>
        <dbReference type="Rhea" id="RHEA-COMP:11727"/>
        <dbReference type="Rhea" id="RHEA-COMP:11728"/>
        <dbReference type="ChEBI" id="CHEBI:13193"/>
        <dbReference type="ChEBI" id="CHEBI:15378"/>
        <dbReference type="ChEBI" id="CHEBI:17499"/>
        <dbReference type="ChEBI" id="CHEBI:29950"/>
        <dbReference type="ChEBI" id="CHEBI:30616"/>
        <dbReference type="ChEBI" id="CHEBI:33019"/>
        <dbReference type="ChEBI" id="CHEBI:61963"/>
        <dbReference type="ChEBI" id="CHEBI:65315"/>
        <dbReference type="ChEBI" id="CHEBI:87170"/>
        <dbReference type="ChEBI" id="CHEBI:456215"/>
        <dbReference type="EC" id="2.8.1.13"/>
    </reaction>
</comment>
<comment type="subcellular location">
    <subcellularLocation>
        <location evidence="1">Cytoplasm</location>
    </subcellularLocation>
</comment>
<comment type="similarity">
    <text evidence="1">Belongs to the MnmA/TRMU family.</text>
</comment>
<accession>Q039P7</accession>
<organism>
    <name type="scientific">Lacticaseibacillus paracasei (strain ATCC 334 / BCRC 17002 / CCUG 31169 / CIP 107868 / KCTC 3260 / NRRL B-441)</name>
    <name type="common">Lactobacillus paracasei</name>
    <dbReference type="NCBI Taxonomy" id="321967"/>
    <lineage>
        <taxon>Bacteria</taxon>
        <taxon>Bacillati</taxon>
        <taxon>Bacillota</taxon>
        <taxon>Bacilli</taxon>
        <taxon>Lactobacillales</taxon>
        <taxon>Lactobacillaceae</taxon>
        <taxon>Lacticaseibacillus</taxon>
    </lineage>
</organism>
<name>MNMA_LACP3</name>
<keyword id="KW-0067">ATP-binding</keyword>
<keyword id="KW-0963">Cytoplasm</keyword>
<keyword id="KW-1015">Disulfide bond</keyword>
<keyword id="KW-0547">Nucleotide-binding</keyword>
<keyword id="KW-1185">Reference proteome</keyword>
<keyword id="KW-0694">RNA-binding</keyword>
<keyword id="KW-0808">Transferase</keyword>
<keyword id="KW-0819">tRNA processing</keyword>
<keyword id="KW-0820">tRNA-binding</keyword>